<gene>
    <name type="primary">prfB</name>
    <name type="ordered locus">RT0265</name>
</gene>
<reference key="1">
    <citation type="journal article" date="2004" name="J. Bacteriol.">
        <title>Complete genome sequence of Rickettsia typhi and comparison with sequences of other Rickettsiae.</title>
        <authorList>
            <person name="McLeod M.P."/>
            <person name="Qin X."/>
            <person name="Karpathy S.E."/>
            <person name="Gioia J."/>
            <person name="Highlander S.K."/>
            <person name="Fox G.E."/>
            <person name="McNeill T.Z."/>
            <person name="Jiang H."/>
            <person name="Muzny D."/>
            <person name="Jacob L.S."/>
            <person name="Hawes A.C."/>
            <person name="Sodergren E."/>
            <person name="Gill R."/>
            <person name="Hume J."/>
            <person name="Morgan M."/>
            <person name="Fan G."/>
            <person name="Amin A.G."/>
            <person name="Gibbs R.A."/>
            <person name="Hong C."/>
            <person name="Yu X.-J."/>
            <person name="Walker D.H."/>
            <person name="Weinstock G.M."/>
        </authorList>
    </citation>
    <scope>NUCLEOTIDE SEQUENCE [LARGE SCALE GENOMIC DNA]</scope>
    <source>
        <strain>ATCC VR-144 / Wilmington</strain>
    </source>
</reference>
<proteinExistence type="inferred from homology"/>
<organism>
    <name type="scientific">Rickettsia typhi (strain ATCC VR-144 / Wilmington)</name>
    <dbReference type="NCBI Taxonomy" id="257363"/>
    <lineage>
        <taxon>Bacteria</taxon>
        <taxon>Pseudomonadati</taxon>
        <taxon>Pseudomonadota</taxon>
        <taxon>Alphaproteobacteria</taxon>
        <taxon>Rickettsiales</taxon>
        <taxon>Rickettsiaceae</taxon>
        <taxon>Rickettsieae</taxon>
        <taxon>Rickettsia</taxon>
        <taxon>typhus group</taxon>
    </lineage>
</organism>
<feature type="chain" id="PRO_0000286654" description="Peptide chain release factor 2">
    <location>
        <begin position="1"/>
        <end position="369"/>
    </location>
</feature>
<feature type="modified residue" description="N5-methylglutamine" evidence="1">
    <location>
        <position position="250"/>
    </location>
</feature>
<protein>
    <recommendedName>
        <fullName>Peptide chain release factor 2</fullName>
        <shortName>RF-2</shortName>
    </recommendedName>
</protein>
<keyword id="KW-0963">Cytoplasm</keyword>
<keyword id="KW-0488">Methylation</keyword>
<keyword id="KW-0648">Protein biosynthesis</keyword>
<evidence type="ECO:0000250" key="1"/>
<evidence type="ECO:0000305" key="2"/>
<accession>Q68X96</accession>
<comment type="function">
    <text evidence="1">Peptide chain release factor 2 directs the termination of translation in response to the peptide chain termination codons UGA and UAA.</text>
</comment>
<comment type="subcellular location">
    <subcellularLocation>
        <location evidence="1">Cytoplasm</location>
    </subcellularLocation>
</comment>
<comment type="PTM">
    <text evidence="1">Methylated by PrmC. Methylation increases the termination efficiency of RF2 (By similarity).</text>
</comment>
<comment type="miscellaneous">
    <text>The gene for this protein contains a UGA in-frame termination codon after Leu-23; a naturally occurring frameshift enables complete translation of RF-2. This provides a mechanism for the protein to regulate its own production.</text>
</comment>
<comment type="similarity">
    <text evidence="2">Belongs to the prokaryotic/mitochondrial release factor family.</text>
</comment>
<name>RF2_RICTY</name>
<sequence>MRAGIENYIKNIEQSLELIWRSLDIESLTIRLTELEELTADPSLWNNNANAQILLREKTNIEEKLNVFNNLKSNFEDILELEAMAEVENDFETLNQIEQDFKKLSIIAAKLETECLFSDESDYNNCFLEINAGAGGTESHDWASIMMRMYLRFAERLGFKTQIINMINGEEVGIKSCTIRIIGKRAYGWFKTEAGVHRLVRISPFNAAGKRMTSFASSWVYPEIDDDIAITIEDKDLRIDTFRASGAGGQHVNTTDSAVRITHIPTNTVTQCQSDRSQHKNKAQAMKMLQAKLYKLEMQKRTDSVDKQNANKTDNSWGHQIRSYVLQPYQIVKDLRTDYETSDTKGVLDGNLENFVSASLAMNASGNKK</sequence>
<dbReference type="EMBL" id="AE017197">
    <property type="protein sequence ID" value="AAU03746.1"/>
    <property type="status" value="ALT_SEQ"/>
    <property type="molecule type" value="Genomic_DNA"/>
</dbReference>
<dbReference type="SMR" id="Q68X96"/>
<dbReference type="KEGG" id="rty:RT0265"/>
<dbReference type="eggNOG" id="COG1186">
    <property type="taxonomic scope" value="Bacteria"/>
</dbReference>
<dbReference type="HOGENOM" id="CLU_036856_6_0_5"/>
<dbReference type="OrthoDB" id="9806673at2"/>
<dbReference type="Proteomes" id="UP000000604">
    <property type="component" value="Chromosome"/>
</dbReference>
<dbReference type="GO" id="GO:0005737">
    <property type="term" value="C:cytoplasm"/>
    <property type="evidence" value="ECO:0007669"/>
    <property type="project" value="UniProtKB-SubCell"/>
</dbReference>
<dbReference type="GO" id="GO:0016149">
    <property type="term" value="F:translation release factor activity, codon specific"/>
    <property type="evidence" value="ECO:0007669"/>
    <property type="project" value="UniProtKB-UniRule"/>
</dbReference>
<dbReference type="FunFam" id="3.30.160.20:FF:000010">
    <property type="entry name" value="Peptide chain release factor 2"/>
    <property type="match status" value="1"/>
</dbReference>
<dbReference type="Gene3D" id="3.30.160.20">
    <property type="match status" value="1"/>
</dbReference>
<dbReference type="Gene3D" id="3.30.70.1660">
    <property type="match status" value="1"/>
</dbReference>
<dbReference type="Gene3D" id="1.20.58.410">
    <property type="entry name" value="Release factor"/>
    <property type="match status" value="1"/>
</dbReference>
<dbReference type="HAMAP" id="MF_00094">
    <property type="entry name" value="Rel_fac_2"/>
    <property type="match status" value="1"/>
</dbReference>
<dbReference type="InterPro" id="IPR005139">
    <property type="entry name" value="PCRF"/>
</dbReference>
<dbReference type="InterPro" id="IPR000352">
    <property type="entry name" value="Pep_chain_release_fac_I"/>
</dbReference>
<dbReference type="InterPro" id="IPR045853">
    <property type="entry name" value="Pep_chain_release_fac_I_sf"/>
</dbReference>
<dbReference type="InterPro" id="IPR004374">
    <property type="entry name" value="PrfB"/>
</dbReference>
<dbReference type="NCBIfam" id="TIGR00020">
    <property type="entry name" value="prfB"/>
    <property type="match status" value="1"/>
</dbReference>
<dbReference type="PANTHER" id="PTHR43116:SF3">
    <property type="entry name" value="CLASS I PEPTIDE CHAIN RELEASE FACTOR"/>
    <property type="match status" value="1"/>
</dbReference>
<dbReference type="PANTHER" id="PTHR43116">
    <property type="entry name" value="PEPTIDE CHAIN RELEASE FACTOR 2"/>
    <property type="match status" value="1"/>
</dbReference>
<dbReference type="Pfam" id="PF03462">
    <property type="entry name" value="PCRF"/>
    <property type="match status" value="1"/>
</dbReference>
<dbReference type="Pfam" id="PF00472">
    <property type="entry name" value="RF-1"/>
    <property type="match status" value="1"/>
</dbReference>
<dbReference type="SMART" id="SM00937">
    <property type="entry name" value="PCRF"/>
    <property type="match status" value="1"/>
</dbReference>
<dbReference type="SUPFAM" id="SSF75620">
    <property type="entry name" value="Release factor"/>
    <property type="match status" value="1"/>
</dbReference>
<dbReference type="PROSITE" id="PS00745">
    <property type="entry name" value="RF_PROK_I"/>
    <property type="match status" value="1"/>
</dbReference>